<proteinExistence type="inferred from homology"/>
<name>RRAAH_BURMS</name>
<dbReference type="EC" id="4.1.3.17"/>
<dbReference type="EC" id="4.1.1.112"/>
<dbReference type="EMBL" id="CP000526">
    <property type="protein sequence ID" value="ABM49612.1"/>
    <property type="molecule type" value="Genomic_DNA"/>
</dbReference>
<dbReference type="SMR" id="A1V5A8"/>
<dbReference type="KEGG" id="bmv:BMASAVP1_A2095"/>
<dbReference type="HOGENOM" id="CLU_072626_4_0_4"/>
<dbReference type="GO" id="GO:0047443">
    <property type="term" value="F:4-hydroxy-4-methyl-2-oxoglutarate aldolase activity"/>
    <property type="evidence" value="ECO:0007669"/>
    <property type="project" value="UniProtKB-EC"/>
</dbReference>
<dbReference type="GO" id="GO:0046872">
    <property type="term" value="F:metal ion binding"/>
    <property type="evidence" value="ECO:0007669"/>
    <property type="project" value="UniProtKB-KW"/>
</dbReference>
<dbReference type="GO" id="GO:0008948">
    <property type="term" value="F:oxaloacetate decarboxylase activity"/>
    <property type="evidence" value="ECO:0007669"/>
    <property type="project" value="UniProtKB-EC"/>
</dbReference>
<dbReference type="GO" id="GO:0008428">
    <property type="term" value="F:ribonuclease inhibitor activity"/>
    <property type="evidence" value="ECO:0007669"/>
    <property type="project" value="InterPro"/>
</dbReference>
<dbReference type="GO" id="GO:0051252">
    <property type="term" value="P:regulation of RNA metabolic process"/>
    <property type="evidence" value="ECO:0007669"/>
    <property type="project" value="InterPro"/>
</dbReference>
<dbReference type="CDD" id="cd16841">
    <property type="entry name" value="RraA_family"/>
    <property type="match status" value="1"/>
</dbReference>
<dbReference type="Gene3D" id="3.50.30.40">
    <property type="entry name" value="Ribonuclease E inhibitor RraA/RraA-like"/>
    <property type="match status" value="1"/>
</dbReference>
<dbReference type="InterPro" id="IPR010203">
    <property type="entry name" value="RraA"/>
</dbReference>
<dbReference type="InterPro" id="IPR005493">
    <property type="entry name" value="RraA/RraA-like"/>
</dbReference>
<dbReference type="InterPro" id="IPR036704">
    <property type="entry name" value="RraA/RraA-like_sf"/>
</dbReference>
<dbReference type="NCBIfam" id="TIGR01935">
    <property type="entry name" value="NOT-MenG"/>
    <property type="match status" value="1"/>
</dbReference>
<dbReference type="NCBIfam" id="NF006875">
    <property type="entry name" value="PRK09372.1"/>
    <property type="match status" value="1"/>
</dbReference>
<dbReference type="PANTHER" id="PTHR33254">
    <property type="entry name" value="4-HYDROXY-4-METHYL-2-OXOGLUTARATE ALDOLASE 3-RELATED"/>
    <property type="match status" value="1"/>
</dbReference>
<dbReference type="PANTHER" id="PTHR33254:SF4">
    <property type="entry name" value="4-HYDROXY-4-METHYL-2-OXOGLUTARATE ALDOLASE 3-RELATED"/>
    <property type="match status" value="1"/>
</dbReference>
<dbReference type="Pfam" id="PF03737">
    <property type="entry name" value="RraA-like"/>
    <property type="match status" value="1"/>
</dbReference>
<dbReference type="SUPFAM" id="SSF89562">
    <property type="entry name" value="RraA-like"/>
    <property type="match status" value="1"/>
</dbReference>
<keyword id="KW-0456">Lyase</keyword>
<keyword id="KW-0479">Metal-binding</keyword>
<reference key="1">
    <citation type="journal article" date="2010" name="Genome Biol. Evol.">
        <title>Continuing evolution of Burkholderia mallei through genome reduction and large-scale rearrangements.</title>
        <authorList>
            <person name="Losada L."/>
            <person name="Ronning C.M."/>
            <person name="DeShazer D."/>
            <person name="Woods D."/>
            <person name="Fedorova N."/>
            <person name="Kim H.S."/>
            <person name="Shabalina S.A."/>
            <person name="Pearson T.R."/>
            <person name="Brinkac L."/>
            <person name="Tan P."/>
            <person name="Nandi T."/>
            <person name="Crabtree J."/>
            <person name="Badger J."/>
            <person name="Beckstrom-Sternberg S."/>
            <person name="Saqib M."/>
            <person name="Schutzer S.E."/>
            <person name="Keim P."/>
            <person name="Nierman W.C."/>
        </authorList>
    </citation>
    <scope>NUCLEOTIDE SEQUENCE [LARGE SCALE GENOMIC DNA]</scope>
    <source>
        <strain>SAVP1</strain>
    </source>
</reference>
<accession>A1V5A8</accession>
<feature type="chain" id="PRO_1000013827" description="Putative 4-hydroxy-4-methyl-2-oxoglutarate aldolase">
    <location>
        <begin position="1"/>
        <end position="165"/>
    </location>
</feature>
<feature type="binding site" evidence="1">
    <location>
        <begin position="80"/>
        <end position="83"/>
    </location>
    <ligand>
        <name>substrate</name>
    </ligand>
</feature>
<feature type="binding site" evidence="1">
    <location>
        <position position="102"/>
    </location>
    <ligand>
        <name>substrate</name>
    </ligand>
</feature>
<feature type="binding site" evidence="1">
    <location>
        <position position="103"/>
    </location>
    <ligand>
        <name>a divalent metal cation</name>
        <dbReference type="ChEBI" id="CHEBI:60240"/>
    </ligand>
</feature>
<organism>
    <name type="scientific">Burkholderia mallei (strain SAVP1)</name>
    <dbReference type="NCBI Taxonomy" id="320388"/>
    <lineage>
        <taxon>Bacteria</taxon>
        <taxon>Pseudomonadati</taxon>
        <taxon>Pseudomonadota</taxon>
        <taxon>Betaproteobacteria</taxon>
        <taxon>Burkholderiales</taxon>
        <taxon>Burkholderiaceae</taxon>
        <taxon>Burkholderia</taxon>
        <taxon>pseudomallei group</taxon>
    </lineage>
</organism>
<comment type="function">
    <text evidence="1">Catalyzes the aldol cleavage of 4-hydroxy-4-methyl-2-oxoglutarate (HMG) into 2 molecules of pyruvate. Also contains a secondary oxaloacetate (OAA) decarboxylase activity due to the common pyruvate enolate transition state formed following C-C bond cleavage in the retro-aldol and decarboxylation reactions (By similarity).</text>
</comment>
<comment type="catalytic activity">
    <reaction>
        <text>4-hydroxy-4-methyl-2-oxoglutarate = 2 pyruvate</text>
        <dbReference type="Rhea" id="RHEA:22748"/>
        <dbReference type="ChEBI" id="CHEBI:15361"/>
        <dbReference type="ChEBI" id="CHEBI:58276"/>
        <dbReference type="EC" id="4.1.3.17"/>
    </reaction>
</comment>
<comment type="catalytic activity">
    <reaction>
        <text>oxaloacetate + H(+) = pyruvate + CO2</text>
        <dbReference type="Rhea" id="RHEA:15641"/>
        <dbReference type="ChEBI" id="CHEBI:15361"/>
        <dbReference type="ChEBI" id="CHEBI:15378"/>
        <dbReference type="ChEBI" id="CHEBI:16452"/>
        <dbReference type="ChEBI" id="CHEBI:16526"/>
        <dbReference type="EC" id="4.1.1.112"/>
    </reaction>
</comment>
<comment type="cofactor">
    <cofactor evidence="1">
        <name>a divalent metal cation</name>
        <dbReference type="ChEBI" id="CHEBI:60240"/>
    </cofactor>
    <text evidence="1">Divalent metal cation.</text>
</comment>
<comment type="subunit">
    <text evidence="1">Homotrimer.</text>
</comment>
<comment type="similarity">
    <text evidence="2">Belongs to the class II aldolase/RraA-like family.</text>
</comment>
<gene>
    <name type="ordered locus">BMASAVP1_A2095</name>
</gene>
<sequence>MMFATTDLCDAHEDRLAAGTLRVLEPVFRPFGGVRRFAGPAATLKLFEDNSLVRTALEQDGAGRVLVVDGGGSLRCALVGGNLGKLAEKNGWAGIVVNGCVRDSDELAECRVGVLALAAHPRKSDKRGAGVSDAPVDVRGTRIVPGDWIYADADGVLVSDDALLE</sequence>
<protein>
    <recommendedName>
        <fullName>Putative 4-hydroxy-4-methyl-2-oxoglutarate aldolase</fullName>
        <shortName>HMG aldolase</shortName>
        <ecNumber>4.1.3.17</ecNumber>
    </recommendedName>
    <alternativeName>
        <fullName>Oxaloacetate decarboxylase</fullName>
        <shortName>OAA decarboxylase</shortName>
        <ecNumber>4.1.1.112</ecNumber>
    </alternativeName>
    <alternativeName>
        <fullName>Regulator of ribonuclease activity homolog</fullName>
    </alternativeName>
    <alternativeName>
        <fullName>RraA-like protein</fullName>
    </alternativeName>
</protein>
<evidence type="ECO:0000250" key="1"/>
<evidence type="ECO:0000305" key="2"/>